<dbReference type="EC" id="3.5.4.16" evidence="1"/>
<dbReference type="EMBL" id="CP000252">
    <property type="protein sequence ID" value="ABC77796.1"/>
    <property type="molecule type" value="Genomic_DNA"/>
</dbReference>
<dbReference type="RefSeq" id="WP_011417817.1">
    <property type="nucleotide sequence ID" value="NC_007759.1"/>
</dbReference>
<dbReference type="SMR" id="Q2LUP0"/>
<dbReference type="STRING" id="56780.SYN_01308"/>
<dbReference type="KEGG" id="sat:SYN_01308"/>
<dbReference type="eggNOG" id="COG1469">
    <property type="taxonomic scope" value="Bacteria"/>
</dbReference>
<dbReference type="HOGENOM" id="CLU_062816_1_1_7"/>
<dbReference type="InParanoid" id="Q2LUP0"/>
<dbReference type="OrthoDB" id="9774824at2"/>
<dbReference type="UniPathway" id="UPA00848">
    <property type="reaction ID" value="UER00151"/>
</dbReference>
<dbReference type="Proteomes" id="UP000001933">
    <property type="component" value="Chromosome"/>
</dbReference>
<dbReference type="GO" id="GO:0003934">
    <property type="term" value="F:GTP cyclohydrolase I activity"/>
    <property type="evidence" value="ECO:0007669"/>
    <property type="project" value="UniProtKB-UniRule"/>
</dbReference>
<dbReference type="GO" id="GO:0046654">
    <property type="term" value="P:tetrahydrofolate biosynthetic process"/>
    <property type="evidence" value="ECO:0007669"/>
    <property type="project" value="UniProtKB-UniRule"/>
</dbReference>
<dbReference type="Gene3D" id="3.10.270.10">
    <property type="entry name" value="Urate Oxidase"/>
    <property type="match status" value="1"/>
</dbReference>
<dbReference type="HAMAP" id="MF_01527_B">
    <property type="entry name" value="GTP_cyclohydrol_B"/>
    <property type="match status" value="1"/>
</dbReference>
<dbReference type="InterPro" id="IPR022838">
    <property type="entry name" value="GTP_cyclohydrolase_FolE2"/>
</dbReference>
<dbReference type="InterPro" id="IPR003801">
    <property type="entry name" value="GTP_cyclohydrolase_FolE2/MptA"/>
</dbReference>
<dbReference type="NCBIfam" id="NF010200">
    <property type="entry name" value="PRK13674.1-1"/>
    <property type="match status" value="1"/>
</dbReference>
<dbReference type="PANTHER" id="PTHR36445">
    <property type="entry name" value="GTP CYCLOHYDROLASE MPTA"/>
    <property type="match status" value="1"/>
</dbReference>
<dbReference type="PANTHER" id="PTHR36445:SF1">
    <property type="entry name" value="GTP CYCLOHYDROLASE MPTA"/>
    <property type="match status" value="1"/>
</dbReference>
<dbReference type="Pfam" id="PF02649">
    <property type="entry name" value="GCHY-1"/>
    <property type="match status" value="1"/>
</dbReference>
<evidence type="ECO:0000255" key="1">
    <source>
        <dbReference type="HAMAP-Rule" id="MF_01527"/>
    </source>
</evidence>
<name>GCH4_SYNAS</name>
<feature type="chain" id="PRO_0000289528" description="GTP cyclohydrolase FolE2">
    <location>
        <begin position="1"/>
        <end position="255"/>
    </location>
</feature>
<feature type="site" description="May be catalytically important" evidence="1">
    <location>
        <position position="145"/>
    </location>
</feature>
<accession>Q2LUP0</accession>
<gene>
    <name evidence="1" type="primary">folE2</name>
    <name type="ordered locus">SYNAS_19170</name>
    <name type="ORF">SYN_01308</name>
</gene>
<keyword id="KW-0378">Hydrolase</keyword>
<keyword id="KW-1185">Reference proteome</keyword>
<protein>
    <recommendedName>
        <fullName evidence="1">GTP cyclohydrolase FolE2</fullName>
        <ecNumber evidence="1">3.5.4.16</ecNumber>
    </recommendedName>
</protein>
<reference key="1">
    <citation type="journal article" date="2007" name="Proc. Natl. Acad. Sci. U.S.A.">
        <title>The genome of Syntrophus aciditrophicus: life at the thermodynamic limit of microbial growth.</title>
        <authorList>
            <person name="McInerney M.J."/>
            <person name="Rohlin L."/>
            <person name="Mouttaki H."/>
            <person name="Kim U."/>
            <person name="Krupp R.S."/>
            <person name="Rios-Hernandez L."/>
            <person name="Sieber J."/>
            <person name="Struchtemeyer C.G."/>
            <person name="Bhattacharyya A."/>
            <person name="Campbell J.W."/>
            <person name="Gunsalus R.P."/>
        </authorList>
    </citation>
    <scope>NUCLEOTIDE SEQUENCE [LARGE SCALE GENOMIC DNA]</scope>
    <source>
        <strain>SB</strain>
    </source>
</reference>
<proteinExistence type="inferred from homology"/>
<organism>
    <name type="scientific">Syntrophus aciditrophicus (strain SB)</name>
    <dbReference type="NCBI Taxonomy" id="56780"/>
    <lineage>
        <taxon>Bacteria</taxon>
        <taxon>Pseudomonadati</taxon>
        <taxon>Thermodesulfobacteriota</taxon>
        <taxon>Syntrophia</taxon>
        <taxon>Syntrophales</taxon>
        <taxon>Syntrophaceae</taxon>
        <taxon>Syntrophus</taxon>
    </lineage>
</organism>
<comment type="function">
    <text evidence="1">Converts GTP to 7,8-dihydroneopterin triphosphate.</text>
</comment>
<comment type="catalytic activity">
    <reaction evidence="1">
        <text>GTP + H2O = 7,8-dihydroneopterin 3'-triphosphate + formate + H(+)</text>
        <dbReference type="Rhea" id="RHEA:17473"/>
        <dbReference type="ChEBI" id="CHEBI:15377"/>
        <dbReference type="ChEBI" id="CHEBI:15378"/>
        <dbReference type="ChEBI" id="CHEBI:15740"/>
        <dbReference type="ChEBI" id="CHEBI:37565"/>
        <dbReference type="ChEBI" id="CHEBI:58462"/>
        <dbReference type="EC" id="3.5.4.16"/>
    </reaction>
</comment>
<comment type="pathway">
    <text evidence="1">Cofactor biosynthesis; 7,8-dihydroneopterin triphosphate biosynthesis; 7,8-dihydroneopterin triphosphate from GTP: step 1/1.</text>
</comment>
<comment type="similarity">
    <text evidence="1">Belongs to the GTP cyclohydrolase IV family.</text>
</comment>
<sequence length="255" mass="29293">MIDIQNLEDHRKINIQKVGVKGINYPIVVLDKAKGTQHVNASINMYVDLPHHFKGTHMSRFIEVLNEFRGEINIRTFHTILEKVRDKLKAESAHMEITFPYFIEKTAPVSGAKSLMDYICAFSGMNAENKKDFLVGVVVPVTTVCPCSKEISCMGAHNQRSHVTVKVRFKKFFWLEDIIRLVETSASGEVYSLLKRVDEKYVTEQGYANPMFVEDVVRNVAERLNENSNLTWYSVEAENFESIHNHNAYAYVEKE</sequence>